<protein>
    <recommendedName>
        <fullName evidence="1">ATP-dependent Clp protease proteolytic subunit</fullName>
        <ecNumber evidence="1">3.4.21.92</ecNumber>
    </recommendedName>
    <alternativeName>
        <fullName evidence="1">Endopeptidase Clp</fullName>
    </alternativeName>
</protein>
<reference key="1">
    <citation type="submission" date="2007-12" db="EMBL/GenBank/DDBJ databases">
        <title>Complete sequence of Methylobacterium extorquens PA1.</title>
        <authorList>
            <consortium name="US DOE Joint Genome Institute"/>
            <person name="Copeland A."/>
            <person name="Lucas S."/>
            <person name="Lapidus A."/>
            <person name="Barry K."/>
            <person name="Glavina del Rio T."/>
            <person name="Dalin E."/>
            <person name="Tice H."/>
            <person name="Pitluck S."/>
            <person name="Saunders E."/>
            <person name="Brettin T."/>
            <person name="Bruce D."/>
            <person name="Detter J.C."/>
            <person name="Han C."/>
            <person name="Schmutz J."/>
            <person name="Larimer F."/>
            <person name="Land M."/>
            <person name="Hauser L."/>
            <person name="Kyrpides N."/>
            <person name="Kim E."/>
            <person name="Marx C."/>
            <person name="Richardson P."/>
        </authorList>
    </citation>
    <scope>NUCLEOTIDE SEQUENCE [LARGE SCALE GENOMIC DNA]</scope>
    <source>
        <strain>PA1</strain>
    </source>
</reference>
<dbReference type="EC" id="3.4.21.92" evidence="1"/>
<dbReference type="EMBL" id="CP000908">
    <property type="protein sequence ID" value="ABY30811.1"/>
    <property type="molecule type" value="Genomic_DNA"/>
</dbReference>
<dbReference type="RefSeq" id="WP_003600395.1">
    <property type="nucleotide sequence ID" value="NC_010172.1"/>
</dbReference>
<dbReference type="SMR" id="A9W5F5"/>
<dbReference type="MEROPS" id="S14.001"/>
<dbReference type="KEGG" id="mex:Mext_2416"/>
<dbReference type="eggNOG" id="COG0740">
    <property type="taxonomic scope" value="Bacteria"/>
</dbReference>
<dbReference type="HOGENOM" id="CLU_058707_3_3_5"/>
<dbReference type="BioCyc" id="MEXT419610:MEXT_RS12175-MONOMER"/>
<dbReference type="GO" id="GO:0005737">
    <property type="term" value="C:cytoplasm"/>
    <property type="evidence" value="ECO:0007669"/>
    <property type="project" value="UniProtKB-SubCell"/>
</dbReference>
<dbReference type="GO" id="GO:0009368">
    <property type="term" value="C:endopeptidase Clp complex"/>
    <property type="evidence" value="ECO:0007669"/>
    <property type="project" value="TreeGrafter"/>
</dbReference>
<dbReference type="GO" id="GO:0004176">
    <property type="term" value="F:ATP-dependent peptidase activity"/>
    <property type="evidence" value="ECO:0007669"/>
    <property type="project" value="InterPro"/>
</dbReference>
<dbReference type="GO" id="GO:0051117">
    <property type="term" value="F:ATPase binding"/>
    <property type="evidence" value="ECO:0007669"/>
    <property type="project" value="TreeGrafter"/>
</dbReference>
<dbReference type="GO" id="GO:0004252">
    <property type="term" value="F:serine-type endopeptidase activity"/>
    <property type="evidence" value="ECO:0007669"/>
    <property type="project" value="UniProtKB-UniRule"/>
</dbReference>
<dbReference type="GO" id="GO:0006515">
    <property type="term" value="P:protein quality control for misfolded or incompletely synthesized proteins"/>
    <property type="evidence" value="ECO:0007669"/>
    <property type="project" value="TreeGrafter"/>
</dbReference>
<dbReference type="CDD" id="cd07017">
    <property type="entry name" value="S14_ClpP_2"/>
    <property type="match status" value="1"/>
</dbReference>
<dbReference type="FunFam" id="3.90.226.10:FF:000001">
    <property type="entry name" value="ATP-dependent Clp protease proteolytic subunit"/>
    <property type="match status" value="1"/>
</dbReference>
<dbReference type="Gene3D" id="3.90.226.10">
    <property type="entry name" value="2-enoyl-CoA Hydratase, Chain A, domain 1"/>
    <property type="match status" value="1"/>
</dbReference>
<dbReference type="HAMAP" id="MF_00444">
    <property type="entry name" value="ClpP"/>
    <property type="match status" value="1"/>
</dbReference>
<dbReference type="InterPro" id="IPR001907">
    <property type="entry name" value="ClpP"/>
</dbReference>
<dbReference type="InterPro" id="IPR029045">
    <property type="entry name" value="ClpP/crotonase-like_dom_sf"/>
</dbReference>
<dbReference type="InterPro" id="IPR023562">
    <property type="entry name" value="ClpP/TepA"/>
</dbReference>
<dbReference type="InterPro" id="IPR033135">
    <property type="entry name" value="ClpP_His_AS"/>
</dbReference>
<dbReference type="InterPro" id="IPR018215">
    <property type="entry name" value="ClpP_Ser_AS"/>
</dbReference>
<dbReference type="NCBIfam" id="NF001368">
    <property type="entry name" value="PRK00277.1"/>
    <property type="match status" value="1"/>
</dbReference>
<dbReference type="NCBIfam" id="NF009205">
    <property type="entry name" value="PRK12553.1"/>
    <property type="match status" value="1"/>
</dbReference>
<dbReference type="PANTHER" id="PTHR10381">
    <property type="entry name" value="ATP-DEPENDENT CLP PROTEASE PROTEOLYTIC SUBUNIT"/>
    <property type="match status" value="1"/>
</dbReference>
<dbReference type="PANTHER" id="PTHR10381:SF70">
    <property type="entry name" value="ATP-DEPENDENT CLP PROTEASE PROTEOLYTIC SUBUNIT"/>
    <property type="match status" value="1"/>
</dbReference>
<dbReference type="Pfam" id="PF00574">
    <property type="entry name" value="CLP_protease"/>
    <property type="match status" value="1"/>
</dbReference>
<dbReference type="PRINTS" id="PR00127">
    <property type="entry name" value="CLPPROTEASEP"/>
</dbReference>
<dbReference type="SUPFAM" id="SSF52096">
    <property type="entry name" value="ClpP/crotonase"/>
    <property type="match status" value="1"/>
</dbReference>
<dbReference type="PROSITE" id="PS00382">
    <property type="entry name" value="CLP_PROTEASE_HIS"/>
    <property type="match status" value="1"/>
</dbReference>
<dbReference type="PROSITE" id="PS00381">
    <property type="entry name" value="CLP_PROTEASE_SER"/>
    <property type="match status" value="1"/>
</dbReference>
<sequence length="208" mass="23098">MRDPVDYFHNSLVPMVVEQSSRGERAFDIYSRLLRERIIFLTGPVEDQGASLIVAQLLFLEAENPKKEISFYINSPGGVVTSGLSIYDTMQFIRCPVTTLCVGQAASMGSLLLAAGEAGHRFALPNARIMVHQPSGGFQGQATDILIHAREIEALKKRLNEIYVKHTGREYETIHQALERDNFMTADAAKEFGLIDDILHKRPEPAAA</sequence>
<gene>
    <name evidence="1" type="primary">clpP</name>
    <name type="ordered locus">Mext_2416</name>
</gene>
<proteinExistence type="inferred from homology"/>
<name>CLPP_METEP</name>
<evidence type="ECO:0000255" key="1">
    <source>
        <dbReference type="HAMAP-Rule" id="MF_00444"/>
    </source>
</evidence>
<feature type="chain" id="PRO_1000189655" description="ATP-dependent Clp protease proteolytic subunit">
    <location>
        <begin position="1"/>
        <end position="208"/>
    </location>
</feature>
<feature type="active site" description="Nucleophile" evidence="1">
    <location>
        <position position="107"/>
    </location>
</feature>
<feature type="active site" evidence="1">
    <location>
        <position position="132"/>
    </location>
</feature>
<keyword id="KW-0963">Cytoplasm</keyword>
<keyword id="KW-0378">Hydrolase</keyword>
<keyword id="KW-0645">Protease</keyword>
<keyword id="KW-0720">Serine protease</keyword>
<comment type="function">
    <text evidence="1">Cleaves peptides in various proteins in a process that requires ATP hydrolysis. Has a chymotrypsin-like activity. Plays a major role in the degradation of misfolded proteins.</text>
</comment>
<comment type="catalytic activity">
    <reaction evidence="1">
        <text>Hydrolysis of proteins to small peptides in the presence of ATP and magnesium. alpha-casein is the usual test substrate. In the absence of ATP, only oligopeptides shorter than five residues are hydrolyzed (such as succinyl-Leu-Tyr-|-NHMec, and Leu-Tyr-Leu-|-Tyr-Trp, in which cleavage of the -Tyr-|-Leu- and -Tyr-|-Trp bonds also occurs).</text>
        <dbReference type="EC" id="3.4.21.92"/>
    </reaction>
</comment>
<comment type="subunit">
    <text evidence="1">Fourteen ClpP subunits assemble into 2 heptameric rings which stack back to back to give a disk-like structure with a central cavity, resembling the structure of eukaryotic proteasomes.</text>
</comment>
<comment type="subcellular location">
    <subcellularLocation>
        <location evidence="1">Cytoplasm</location>
    </subcellularLocation>
</comment>
<comment type="similarity">
    <text evidence="1">Belongs to the peptidase S14 family.</text>
</comment>
<accession>A9W5F5</accession>
<organism>
    <name type="scientific">Methylorubrum extorquens (strain PA1)</name>
    <name type="common">Methylobacterium extorquens</name>
    <dbReference type="NCBI Taxonomy" id="419610"/>
    <lineage>
        <taxon>Bacteria</taxon>
        <taxon>Pseudomonadati</taxon>
        <taxon>Pseudomonadota</taxon>
        <taxon>Alphaproteobacteria</taxon>
        <taxon>Hyphomicrobiales</taxon>
        <taxon>Methylobacteriaceae</taxon>
        <taxon>Methylorubrum</taxon>
    </lineage>
</organism>